<dbReference type="EMBL" id="U02543">
    <property type="protein sequence ID" value="AAA21356.1"/>
    <property type="molecule type" value="mRNA"/>
</dbReference>
<dbReference type="EMBL" id="U81502">
    <property type="protein sequence ID" value="AAB51683.1"/>
    <property type="molecule type" value="Genomic_DNA"/>
</dbReference>
<dbReference type="EMBL" id="AJ574644">
    <property type="protein sequence ID" value="CAE00882.1"/>
    <property type="molecule type" value="Genomic_DNA"/>
</dbReference>
<dbReference type="EMBL" id="AJ574762">
    <property type="protein sequence ID" value="CAE00417.1"/>
    <property type="molecule type" value="Genomic_DNA"/>
</dbReference>
<dbReference type="EMBL" id="AJ574763">
    <property type="protein sequence ID" value="CAE00419.1"/>
    <property type="molecule type" value="Genomic_DNA"/>
</dbReference>
<dbReference type="EMBL" id="AJ574764">
    <property type="protein sequence ID" value="CAE00421.1"/>
    <property type="molecule type" value="Genomic_DNA"/>
</dbReference>
<dbReference type="EMBL" id="AJ574765">
    <property type="protein sequence ID" value="CAE00423.1"/>
    <property type="molecule type" value="Genomic_DNA"/>
</dbReference>
<dbReference type="EMBL" id="AJ574766">
    <property type="protein sequence ID" value="CAE00425.1"/>
    <property type="molecule type" value="Genomic_DNA"/>
</dbReference>
<dbReference type="EMBL" id="AJ574767">
    <property type="protein sequence ID" value="CAE00427.1"/>
    <property type="molecule type" value="Genomic_DNA"/>
</dbReference>
<dbReference type="EMBL" id="AJ574768">
    <property type="protein sequence ID" value="CAE00429.1"/>
    <property type="molecule type" value="Genomic_DNA"/>
</dbReference>
<dbReference type="EMBL" id="AJ574769">
    <property type="protein sequence ID" value="CAE00431.1"/>
    <property type="molecule type" value="Genomic_DNA"/>
</dbReference>
<dbReference type="EMBL" id="AJ574770">
    <property type="protein sequence ID" value="CAE00433.1"/>
    <property type="molecule type" value="Genomic_DNA"/>
</dbReference>
<dbReference type="EMBL" id="AJ574771">
    <property type="protein sequence ID" value="CAE00435.1"/>
    <property type="molecule type" value="Genomic_DNA"/>
</dbReference>
<dbReference type="EMBL" id="AJ574772">
    <property type="protein sequence ID" value="CAE00437.1"/>
    <property type="molecule type" value="Genomic_DNA"/>
</dbReference>
<dbReference type="EMBL" id="AJ574773">
    <property type="protein sequence ID" value="CAE00439.1"/>
    <property type="molecule type" value="Genomic_DNA"/>
</dbReference>
<dbReference type="EMBL" id="AJ574774">
    <property type="protein sequence ID" value="CAE00441.1"/>
    <property type="molecule type" value="Genomic_DNA"/>
</dbReference>
<dbReference type="EMBL" id="AE014297">
    <property type="protein sequence ID" value="AAF51928.1"/>
    <property type="molecule type" value="Genomic_DNA"/>
</dbReference>
<dbReference type="RefSeq" id="NP_524242.2">
    <property type="nucleotide sequence ID" value="NM_079518.3"/>
</dbReference>
<dbReference type="SMR" id="Q23970"/>
<dbReference type="FunCoup" id="Q23970">
    <property type="interactions" value="54"/>
</dbReference>
<dbReference type="STRING" id="7227.FBpp0078304"/>
<dbReference type="PaxDb" id="7227-FBpp0078304"/>
<dbReference type="DNASU" id="40738"/>
<dbReference type="EnsemblMetazoa" id="FBtr0078655">
    <property type="protein sequence ID" value="FBpp0078304"/>
    <property type="gene ID" value="FBgn0010403"/>
</dbReference>
<dbReference type="GeneID" id="40738"/>
<dbReference type="KEGG" id="dme:Dmel_CG11422"/>
<dbReference type="AGR" id="FB:FBgn0010403"/>
<dbReference type="CTD" id="40738"/>
<dbReference type="FlyBase" id="FBgn0010403">
    <property type="gene designation" value="Obp83b"/>
</dbReference>
<dbReference type="VEuPathDB" id="VectorBase:FBgn0010403"/>
<dbReference type="eggNOG" id="ENOG502S7DV">
    <property type="taxonomic scope" value="Eukaryota"/>
</dbReference>
<dbReference type="GeneTree" id="ENSGT00520000056125"/>
<dbReference type="HOGENOM" id="CLU_107288_1_0_1"/>
<dbReference type="InParanoid" id="Q23970"/>
<dbReference type="OMA" id="ASKGCIH"/>
<dbReference type="OrthoDB" id="7881430at2759"/>
<dbReference type="PhylomeDB" id="Q23970"/>
<dbReference type="BioGRID-ORCS" id="40738">
    <property type="hits" value="0 hits in 1 CRISPR screen"/>
</dbReference>
<dbReference type="GenomeRNAi" id="40738"/>
<dbReference type="PRO" id="PR:Q23970"/>
<dbReference type="Proteomes" id="UP000000803">
    <property type="component" value="Chromosome 3R"/>
</dbReference>
<dbReference type="Bgee" id="FBgn0010403">
    <property type="expression patterns" value="Expressed in epithelial cell in antenna and 65 other cell types or tissues"/>
</dbReference>
<dbReference type="ExpressionAtlas" id="Q23970">
    <property type="expression patterns" value="baseline and differential"/>
</dbReference>
<dbReference type="GO" id="GO:0005576">
    <property type="term" value="C:extracellular region"/>
    <property type="evidence" value="ECO:0000255"/>
    <property type="project" value="FlyBase"/>
</dbReference>
<dbReference type="GO" id="GO:0005615">
    <property type="term" value="C:extracellular space"/>
    <property type="evidence" value="ECO:0000318"/>
    <property type="project" value="GO_Central"/>
</dbReference>
<dbReference type="GO" id="GO:0005549">
    <property type="term" value="F:odorant binding"/>
    <property type="evidence" value="ECO:0000250"/>
    <property type="project" value="FlyBase"/>
</dbReference>
<dbReference type="GO" id="GO:0007606">
    <property type="term" value="P:sensory perception of chemical stimulus"/>
    <property type="evidence" value="ECO:0000250"/>
    <property type="project" value="FlyBase"/>
</dbReference>
<dbReference type="GO" id="GO:0007608">
    <property type="term" value="P:sensory perception of smell"/>
    <property type="evidence" value="ECO:0000318"/>
    <property type="project" value="GO_Central"/>
</dbReference>
<dbReference type="CDD" id="cd23992">
    <property type="entry name" value="PBP_GOBP"/>
    <property type="match status" value="1"/>
</dbReference>
<dbReference type="FunFam" id="1.10.238.20:FF:000001">
    <property type="entry name" value="General odorant-binding protein lush"/>
    <property type="match status" value="1"/>
</dbReference>
<dbReference type="Gene3D" id="1.10.238.20">
    <property type="entry name" value="Pheromone/general odorant binding protein domain"/>
    <property type="match status" value="1"/>
</dbReference>
<dbReference type="InterPro" id="IPR006170">
    <property type="entry name" value="PBP/GOBP"/>
</dbReference>
<dbReference type="InterPro" id="IPR036728">
    <property type="entry name" value="PBP_GOBP_sf"/>
</dbReference>
<dbReference type="PANTHER" id="PTHR11857:SF45">
    <property type="entry name" value="GENERAL ODORANT-BINDING PROTEIN 83A-RELATED"/>
    <property type="match status" value="1"/>
</dbReference>
<dbReference type="PANTHER" id="PTHR11857">
    <property type="entry name" value="ODORANT BINDING PROTEIN-RELATED"/>
    <property type="match status" value="1"/>
</dbReference>
<dbReference type="Pfam" id="PF01395">
    <property type="entry name" value="PBP_GOBP"/>
    <property type="match status" value="1"/>
</dbReference>
<dbReference type="PRINTS" id="PR00485">
    <property type="entry name" value="MEALWORMBTLB"/>
</dbReference>
<dbReference type="SMART" id="SM00708">
    <property type="entry name" value="PhBP"/>
    <property type="match status" value="1"/>
</dbReference>
<dbReference type="SUPFAM" id="SSF47565">
    <property type="entry name" value="Insect pheromone/odorant-binding proteins"/>
    <property type="match status" value="1"/>
</dbReference>
<accession>Q23970</accession>
<accession>P91684</accession>
<accession>Q9VNK3</accession>
<sequence length="141" mass="16112">MVKYPLILLLIGCAAAQEPRRDGEWPPPAILKLGKHFHDICAPKTGVTDEAIKEFSDGQIHEDEALKCYMNCLFHEFEVVDDNGDVHMEKVLNAIPGEKLRNIMMEASKGCIHPEGDTLCHKAWWFHQCWKKADPVHYFLV</sequence>
<evidence type="ECO:0000250" key="1"/>
<evidence type="ECO:0000255" key="2"/>
<evidence type="ECO:0000269" key="3">
    <source>
    </source>
</evidence>
<evidence type="ECO:0000269" key="4">
    <source>
    </source>
</evidence>
<evidence type="ECO:0000305" key="5"/>
<feature type="signal peptide" evidence="2">
    <location>
        <begin position="1"/>
        <end position="16"/>
    </location>
</feature>
<feature type="chain" id="PRO_0000012591" description="Pheromone-binding protein-related protein 6">
    <location>
        <begin position="17"/>
        <end position="141"/>
    </location>
</feature>
<feature type="disulfide bond" evidence="1">
    <location>
        <begin position="41"/>
        <end position="72"/>
    </location>
</feature>
<feature type="disulfide bond" evidence="1">
    <location>
        <begin position="68"/>
        <end position="120"/>
    </location>
</feature>
<feature type="disulfide bond" evidence="1">
    <location>
        <begin position="111"/>
        <end position="129"/>
    </location>
</feature>
<feature type="sequence conflict" description="In Ref. 1; AAA21356." evidence="5" ref="1">
    <original>V</original>
    <variation>L</variation>
    <location>
        <position position="2"/>
    </location>
</feature>
<proteinExistence type="evidence at protein level"/>
<protein>
    <recommendedName>
        <fullName>Pheromone-binding protein-related protein 6</fullName>
        <shortName>PBPRP-6</shortName>
    </recommendedName>
    <alternativeName>
        <fullName>Odorant-binding protein OS-E</fullName>
    </alternativeName>
</protein>
<comment type="subcellular location">
    <subcellularLocation>
        <location evidence="5">Secreted</location>
    </subcellularLocation>
    <text evidence="5">Secreted in the lumen of olfactory hairs.</text>
</comment>
<comment type="tissue specificity">
    <text evidence="3 4">Antenna. Mostly expressed in two types of sensory hairs, sensilla trichodea and small sensilla basiconica, in the ventro-lateral region of the third antennal segment (at protein level).</text>
</comment>
<comment type="developmental stage">
    <text evidence="3">Expressed in adult but not in larval olfactory organs.</text>
</comment>
<comment type="similarity">
    <text evidence="5">Belongs to the PBP/GOBP family.</text>
</comment>
<gene>
    <name type="primary">Obp83b</name>
    <name type="synonym">Os-E</name>
    <name type="synonym">PBPRP6</name>
    <name type="ORF">CG11422</name>
</gene>
<organism>
    <name type="scientific">Drosophila melanogaster</name>
    <name type="common">Fruit fly</name>
    <dbReference type="NCBI Taxonomy" id="7227"/>
    <lineage>
        <taxon>Eukaryota</taxon>
        <taxon>Metazoa</taxon>
        <taxon>Ecdysozoa</taxon>
        <taxon>Arthropoda</taxon>
        <taxon>Hexapoda</taxon>
        <taxon>Insecta</taxon>
        <taxon>Pterygota</taxon>
        <taxon>Neoptera</taxon>
        <taxon>Endopterygota</taxon>
        <taxon>Diptera</taxon>
        <taxon>Brachycera</taxon>
        <taxon>Muscomorpha</taxon>
        <taxon>Ephydroidea</taxon>
        <taxon>Drosophilidae</taxon>
        <taxon>Drosophila</taxon>
        <taxon>Sophophora</taxon>
    </lineage>
</organism>
<keyword id="KW-1015">Disulfide bond</keyword>
<keyword id="KW-1185">Reference proteome</keyword>
<keyword id="KW-0964">Secreted</keyword>
<keyword id="KW-0732">Signal</keyword>
<reference key="1">
    <citation type="journal article" date="1994" name="J. Biol. Chem.">
        <title>Putative Drosophila pheromone-binding proteins expressed in a subregion of the olfactory system.</title>
        <authorList>
            <person name="McKenna M.P."/>
            <person name="Hekmat-Scafe D.S."/>
            <person name="Gaines P."/>
            <person name="Carlson J.R."/>
        </authorList>
    </citation>
    <scope>NUCLEOTIDE SEQUENCE [MRNA]</scope>
    <scope>TISSUE SPECIFICITY</scope>
    <scope>DEVELOPMENTAL STAGE</scope>
    <source>
        <strain>CS-5</strain>
        <tissue>Antenna</tissue>
    </source>
</reference>
<reference key="2">
    <citation type="journal article" date="1997" name="J. Neurosci.">
        <title>Coexpression of two odorant-binding protein homologs in Drosophila: implications for olfactory coding.</title>
        <authorList>
            <person name="Hekmat-Scafe D.S."/>
            <person name="Steinbrecht R.A."/>
            <person name="Carlson J.R."/>
        </authorList>
    </citation>
    <scope>NUCLEOTIDE SEQUENCE [GENOMIC DNA]</scope>
    <scope>SUBCELLULAR LOCATION</scope>
    <scope>TISSUE SPECIFICITY</scope>
    <source>
        <strain>Canton-S</strain>
    </source>
</reference>
<reference key="3">
    <citation type="journal article" date="2003" name="Genetics">
        <title>Patterns of nucleotide polymorphism and divergence in the odorant-binding protein genes OS-E and OS-F: analysis in the melanogaster species subgroup of Drosophila.</title>
        <authorList>
            <person name="Sanchez-Gracia A."/>
            <person name="Aguade M."/>
            <person name="Rozas J."/>
        </authorList>
    </citation>
    <scope>NUCLEOTIDE SEQUENCE [GENOMIC DNA]</scope>
    <source>
        <strain>M11</strain>
        <strain>M13</strain>
        <strain>M2</strain>
        <strain>M20</strain>
        <strain>M22</strain>
        <strain>M23</strain>
        <strain>M26</strain>
        <strain>M36</strain>
        <strain>M40</strain>
        <strain>M47</strain>
        <strain>M54</strain>
        <strain>M55</strain>
        <strain>M59</strain>
        <strain>M66</strain>
    </source>
</reference>
<reference key="4">
    <citation type="journal article" date="2000" name="Science">
        <title>The genome sequence of Drosophila melanogaster.</title>
        <authorList>
            <person name="Adams M.D."/>
            <person name="Celniker S.E."/>
            <person name="Holt R.A."/>
            <person name="Evans C.A."/>
            <person name="Gocayne J.D."/>
            <person name="Amanatides P.G."/>
            <person name="Scherer S.E."/>
            <person name="Li P.W."/>
            <person name="Hoskins R.A."/>
            <person name="Galle R.F."/>
            <person name="George R.A."/>
            <person name="Lewis S.E."/>
            <person name="Richards S."/>
            <person name="Ashburner M."/>
            <person name="Henderson S.N."/>
            <person name="Sutton G.G."/>
            <person name="Wortman J.R."/>
            <person name="Yandell M.D."/>
            <person name="Zhang Q."/>
            <person name="Chen L.X."/>
            <person name="Brandon R.C."/>
            <person name="Rogers Y.-H.C."/>
            <person name="Blazej R.G."/>
            <person name="Champe M."/>
            <person name="Pfeiffer B.D."/>
            <person name="Wan K.H."/>
            <person name="Doyle C."/>
            <person name="Baxter E.G."/>
            <person name="Helt G."/>
            <person name="Nelson C.R."/>
            <person name="Miklos G.L.G."/>
            <person name="Abril J.F."/>
            <person name="Agbayani A."/>
            <person name="An H.-J."/>
            <person name="Andrews-Pfannkoch C."/>
            <person name="Baldwin D."/>
            <person name="Ballew R.M."/>
            <person name="Basu A."/>
            <person name="Baxendale J."/>
            <person name="Bayraktaroglu L."/>
            <person name="Beasley E.M."/>
            <person name="Beeson K.Y."/>
            <person name="Benos P.V."/>
            <person name="Berman B.P."/>
            <person name="Bhandari D."/>
            <person name="Bolshakov S."/>
            <person name="Borkova D."/>
            <person name="Botchan M.R."/>
            <person name="Bouck J."/>
            <person name="Brokstein P."/>
            <person name="Brottier P."/>
            <person name="Burtis K.C."/>
            <person name="Busam D.A."/>
            <person name="Butler H."/>
            <person name="Cadieu E."/>
            <person name="Center A."/>
            <person name="Chandra I."/>
            <person name="Cherry J.M."/>
            <person name="Cawley S."/>
            <person name="Dahlke C."/>
            <person name="Davenport L.B."/>
            <person name="Davies P."/>
            <person name="de Pablos B."/>
            <person name="Delcher A."/>
            <person name="Deng Z."/>
            <person name="Mays A.D."/>
            <person name="Dew I."/>
            <person name="Dietz S.M."/>
            <person name="Dodson K."/>
            <person name="Doup L.E."/>
            <person name="Downes M."/>
            <person name="Dugan-Rocha S."/>
            <person name="Dunkov B.C."/>
            <person name="Dunn P."/>
            <person name="Durbin K.J."/>
            <person name="Evangelista C.C."/>
            <person name="Ferraz C."/>
            <person name="Ferriera S."/>
            <person name="Fleischmann W."/>
            <person name="Fosler C."/>
            <person name="Gabrielian A.E."/>
            <person name="Garg N.S."/>
            <person name="Gelbart W.M."/>
            <person name="Glasser K."/>
            <person name="Glodek A."/>
            <person name="Gong F."/>
            <person name="Gorrell J.H."/>
            <person name="Gu Z."/>
            <person name="Guan P."/>
            <person name="Harris M."/>
            <person name="Harris N.L."/>
            <person name="Harvey D.A."/>
            <person name="Heiman T.J."/>
            <person name="Hernandez J.R."/>
            <person name="Houck J."/>
            <person name="Hostin D."/>
            <person name="Houston K.A."/>
            <person name="Howland T.J."/>
            <person name="Wei M.-H."/>
            <person name="Ibegwam C."/>
            <person name="Jalali M."/>
            <person name="Kalush F."/>
            <person name="Karpen G.H."/>
            <person name="Ke Z."/>
            <person name="Kennison J.A."/>
            <person name="Ketchum K.A."/>
            <person name="Kimmel B.E."/>
            <person name="Kodira C.D."/>
            <person name="Kraft C.L."/>
            <person name="Kravitz S."/>
            <person name="Kulp D."/>
            <person name="Lai Z."/>
            <person name="Lasko P."/>
            <person name="Lei Y."/>
            <person name="Levitsky A.A."/>
            <person name="Li J.H."/>
            <person name="Li Z."/>
            <person name="Liang Y."/>
            <person name="Lin X."/>
            <person name="Liu X."/>
            <person name="Mattei B."/>
            <person name="McIntosh T.C."/>
            <person name="McLeod M.P."/>
            <person name="McPherson D."/>
            <person name="Merkulov G."/>
            <person name="Milshina N.V."/>
            <person name="Mobarry C."/>
            <person name="Morris J."/>
            <person name="Moshrefi A."/>
            <person name="Mount S.M."/>
            <person name="Moy M."/>
            <person name="Murphy B."/>
            <person name="Murphy L."/>
            <person name="Muzny D.M."/>
            <person name="Nelson D.L."/>
            <person name="Nelson D.R."/>
            <person name="Nelson K.A."/>
            <person name="Nixon K."/>
            <person name="Nusskern D.R."/>
            <person name="Pacleb J.M."/>
            <person name="Palazzolo M."/>
            <person name="Pittman G.S."/>
            <person name="Pan S."/>
            <person name="Pollard J."/>
            <person name="Puri V."/>
            <person name="Reese M.G."/>
            <person name="Reinert K."/>
            <person name="Remington K."/>
            <person name="Saunders R.D.C."/>
            <person name="Scheeler F."/>
            <person name="Shen H."/>
            <person name="Shue B.C."/>
            <person name="Siden-Kiamos I."/>
            <person name="Simpson M."/>
            <person name="Skupski M.P."/>
            <person name="Smith T.J."/>
            <person name="Spier E."/>
            <person name="Spradling A.C."/>
            <person name="Stapleton M."/>
            <person name="Strong R."/>
            <person name="Sun E."/>
            <person name="Svirskas R."/>
            <person name="Tector C."/>
            <person name="Turner R."/>
            <person name="Venter E."/>
            <person name="Wang A.H."/>
            <person name="Wang X."/>
            <person name="Wang Z.-Y."/>
            <person name="Wassarman D.A."/>
            <person name="Weinstock G.M."/>
            <person name="Weissenbach J."/>
            <person name="Williams S.M."/>
            <person name="Woodage T."/>
            <person name="Worley K.C."/>
            <person name="Wu D."/>
            <person name="Yang S."/>
            <person name="Yao Q.A."/>
            <person name="Ye J."/>
            <person name="Yeh R.-F."/>
            <person name="Zaveri J.S."/>
            <person name="Zhan M."/>
            <person name="Zhang G."/>
            <person name="Zhao Q."/>
            <person name="Zheng L."/>
            <person name="Zheng X.H."/>
            <person name="Zhong F.N."/>
            <person name="Zhong W."/>
            <person name="Zhou X."/>
            <person name="Zhu S.C."/>
            <person name="Zhu X."/>
            <person name="Smith H.O."/>
            <person name="Gibbs R.A."/>
            <person name="Myers E.W."/>
            <person name="Rubin G.M."/>
            <person name="Venter J.C."/>
        </authorList>
    </citation>
    <scope>NUCLEOTIDE SEQUENCE [LARGE SCALE GENOMIC DNA]</scope>
    <source>
        <strain>Berkeley</strain>
    </source>
</reference>
<reference key="5">
    <citation type="journal article" date="2002" name="Genome Biol.">
        <title>Annotation of the Drosophila melanogaster euchromatic genome: a systematic review.</title>
        <authorList>
            <person name="Misra S."/>
            <person name="Crosby M.A."/>
            <person name="Mungall C.J."/>
            <person name="Matthews B.B."/>
            <person name="Campbell K.S."/>
            <person name="Hradecky P."/>
            <person name="Huang Y."/>
            <person name="Kaminker J.S."/>
            <person name="Millburn G.H."/>
            <person name="Prochnik S.E."/>
            <person name="Smith C.D."/>
            <person name="Tupy J.L."/>
            <person name="Whitfield E.J."/>
            <person name="Bayraktaroglu L."/>
            <person name="Berman B.P."/>
            <person name="Bettencourt B.R."/>
            <person name="Celniker S.E."/>
            <person name="de Grey A.D.N.J."/>
            <person name="Drysdale R.A."/>
            <person name="Harris N.L."/>
            <person name="Richter J."/>
            <person name="Russo S."/>
            <person name="Schroeder A.J."/>
            <person name="Shu S.Q."/>
            <person name="Stapleton M."/>
            <person name="Yamada C."/>
            <person name="Ashburner M."/>
            <person name="Gelbart W.M."/>
            <person name="Rubin G.M."/>
            <person name="Lewis S.E."/>
        </authorList>
    </citation>
    <scope>GENOME REANNOTATION</scope>
    <source>
        <strain>Berkeley</strain>
    </source>
</reference>
<name>PBP6_DROME</name>